<organism>
    <name type="scientific">Staphylococcus aureus (strain COL)</name>
    <dbReference type="NCBI Taxonomy" id="93062"/>
    <lineage>
        <taxon>Bacteria</taxon>
        <taxon>Bacillati</taxon>
        <taxon>Bacillota</taxon>
        <taxon>Bacilli</taxon>
        <taxon>Bacillales</taxon>
        <taxon>Staphylococcaceae</taxon>
        <taxon>Staphylococcus</taxon>
    </lineage>
</organism>
<sequence>MNNLKWVAYFLKSRMNWIFWILFLNFLMLGISLIDYDFPIDSLFYIVSLNLSLTMIFLLLTYFKEVKLYKHFDKDKEIEEIKHKDLAETPFQRHTVDYLYRQISAHKEKVVEQQLQLNMHEQTITEFVHDIKTPVTAMKLLIDQEKNQERKQALLYEWSRINSMLDTQLYITRLESQRKDMYFDYVSLKRMVIDEIQLTRHISQVKGIGFDVDFKVDDYVYTDIKWCRMIIRQILSNALKYSENFNIEIGTELNDQHVSLYIKDYGRGISKKDMPRIFERGFTSTANRNETTSSGMGLYLVNSVKDQLGIHLQVTSTVGKGTTVRLIFPLQNEIVERMSEVTNLSF</sequence>
<keyword id="KW-0046">Antibiotic resistance</keyword>
<keyword id="KW-0067">ATP-binding</keyword>
<keyword id="KW-1003">Cell membrane</keyword>
<keyword id="KW-0418">Kinase</keyword>
<keyword id="KW-0472">Membrane</keyword>
<keyword id="KW-0547">Nucleotide-binding</keyword>
<keyword id="KW-0808">Transferase</keyword>
<keyword id="KW-0812">Transmembrane</keyword>
<keyword id="KW-1133">Transmembrane helix</keyword>
<keyword id="KW-0902">Two-component regulatory system</keyword>
<keyword id="KW-0843">Virulence</keyword>
<evidence type="ECO:0000250" key="1">
    <source>
        <dbReference type="UniProtKB" id="Q2G0D9"/>
    </source>
</evidence>
<evidence type="ECO:0000255" key="2"/>
<evidence type="ECO:0000255" key="3">
    <source>
        <dbReference type="PROSITE-ProRule" id="PRU00107"/>
    </source>
</evidence>
<evidence type="ECO:0000305" key="4"/>
<proteinExistence type="evidence at protein level"/>
<protein>
    <recommendedName>
        <fullName>Sensor histidine kinase GraS</fullName>
        <ecNumber>2.7.13.3</ecNumber>
    </recommendedName>
    <alternativeName>
        <fullName>Glycopeptide resistance-associated protein S</fullName>
    </alternativeName>
</protein>
<gene>
    <name type="primary">graS</name>
    <name type="ordered locus">SACOL0717</name>
</gene>
<comment type="function">
    <text evidence="1">Member of the two-component regulatory system GraR/GraS involved in resistance against cationic antimicrobial peptides (CAMPs). Functions as a sensor protein kinase which phosphorylates GraR through the auxiliary protein GraX. In turn, GraR up-regulates many genes such as adhesins, exoproteins, transporters, toxins, and proteins involved in cell wall synthesis. Down-regulates the expression of many genes involved in RNA and amino acid synthesis or glycolysis.</text>
</comment>
<comment type="catalytic activity">
    <reaction>
        <text>ATP + protein L-histidine = ADP + protein N-phospho-L-histidine.</text>
        <dbReference type="EC" id="2.7.13.3"/>
    </reaction>
</comment>
<comment type="subunit">
    <text evidence="1">Interacts with GraX.</text>
</comment>
<comment type="subcellular location">
    <subcellularLocation>
        <location evidence="4">Cell membrane</location>
        <topology evidence="4">Multi-pass membrane protein</topology>
    </subcellularLocation>
</comment>
<reference key="1">
    <citation type="journal article" date="2005" name="J. Bacteriol.">
        <title>Insights on evolution of virulence and resistance from the complete genome analysis of an early methicillin-resistant Staphylococcus aureus strain and a biofilm-producing methicillin-resistant Staphylococcus epidermidis strain.</title>
        <authorList>
            <person name="Gill S.R."/>
            <person name="Fouts D.E."/>
            <person name="Archer G.L."/>
            <person name="Mongodin E.F."/>
            <person name="DeBoy R.T."/>
            <person name="Ravel J."/>
            <person name="Paulsen I.T."/>
            <person name="Kolonay J.F."/>
            <person name="Brinkac L.M."/>
            <person name="Beanan M.J."/>
            <person name="Dodson R.J."/>
            <person name="Daugherty S.C."/>
            <person name="Madupu R."/>
            <person name="Angiuoli S.V."/>
            <person name="Durkin A.S."/>
            <person name="Haft D.H."/>
            <person name="Vamathevan J.J."/>
            <person name="Khouri H."/>
            <person name="Utterback T.R."/>
            <person name="Lee C."/>
            <person name="Dimitrov G."/>
            <person name="Jiang L."/>
            <person name="Qin H."/>
            <person name="Weidman J."/>
            <person name="Tran K."/>
            <person name="Kang K.H."/>
            <person name="Hance I.R."/>
            <person name="Nelson K.E."/>
            <person name="Fraser C.M."/>
        </authorList>
    </citation>
    <scope>NUCLEOTIDE SEQUENCE [LARGE SCALE GENOMIC DNA]</scope>
    <source>
        <strain>COL</strain>
    </source>
</reference>
<reference key="2">
    <citation type="journal article" date="2007" name="Antimicrob. Agents Chemother.">
        <title>Interaction of the graRS two-component system with the vraFG ABC transporter to support vancomycin-intermediate resistance in Staphylococcus aureus.</title>
        <authorList>
            <person name="Meehl M."/>
            <person name="Herbert S."/>
            <person name="Goetz F."/>
            <person name="Cheung A."/>
        </authorList>
    </citation>
    <scope>FUNCTION IN CATIONIC ANTIMICROBIAL PEPTIDE RESISTANCE</scope>
</reference>
<feature type="chain" id="PRO_0000347914" description="Sensor histidine kinase GraS">
    <location>
        <begin position="1"/>
        <end position="346"/>
    </location>
</feature>
<feature type="transmembrane region" description="Helical" evidence="2">
    <location>
        <begin position="15"/>
        <end position="35"/>
    </location>
</feature>
<feature type="transmembrane region" description="Helical" evidence="2">
    <location>
        <begin position="43"/>
        <end position="63"/>
    </location>
</feature>
<feature type="domain" description="Histidine kinase" evidence="3">
    <location>
        <begin position="126"/>
        <end position="332"/>
    </location>
</feature>
<dbReference type="EC" id="2.7.13.3"/>
<dbReference type="EMBL" id="CP000046">
    <property type="protein sequence ID" value="AAW37781.1"/>
    <property type="molecule type" value="Genomic_DNA"/>
</dbReference>
<dbReference type="RefSeq" id="WP_001061252.1">
    <property type="nucleotide sequence ID" value="NZ_JBGOFO010000005.1"/>
</dbReference>
<dbReference type="SMR" id="Q5HI08"/>
<dbReference type="KEGG" id="sac:SACOL0717"/>
<dbReference type="HOGENOM" id="CLU_000445_13_1_9"/>
<dbReference type="Proteomes" id="UP000000530">
    <property type="component" value="Chromosome"/>
</dbReference>
<dbReference type="GO" id="GO:0005886">
    <property type="term" value="C:plasma membrane"/>
    <property type="evidence" value="ECO:0007669"/>
    <property type="project" value="UniProtKB-SubCell"/>
</dbReference>
<dbReference type="GO" id="GO:0005524">
    <property type="term" value="F:ATP binding"/>
    <property type="evidence" value="ECO:0007669"/>
    <property type="project" value="UniProtKB-KW"/>
</dbReference>
<dbReference type="GO" id="GO:0004721">
    <property type="term" value="F:phosphoprotein phosphatase activity"/>
    <property type="evidence" value="ECO:0007669"/>
    <property type="project" value="TreeGrafter"/>
</dbReference>
<dbReference type="GO" id="GO:0000155">
    <property type="term" value="F:phosphorelay sensor kinase activity"/>
    <property type="evidence" value="ECO:0007669"/>
    <property type="project" value="InterPro"/>
</dbReference>
<dbReference type="GO" id="GO:0016036">
    <property type="term" value="P:cellular response to phosphate starvation"/>
    <property type="evidence" value="ECO:0007669"/>
    <property type="project" value="TreeGrafter"/>
</dbReference>
<dbReference type="GO" id="GO:0046677">
    <property type="term" value="P:response to antibiotic"/>
    <property type="evidence" value="ECO:0007669"/>
    <property type="project" value="UniProtKB-KW"/>
</dbReference>
<dbReference type="Gene3D" id="3.30.565.10">
    <property type="entry name" value="Histidine kinase-like ATPase, C-terminal domain"/>
    <property type="match status" value="1"/>
</dbReference>
<dbReference type="InterPro" id="IPR050351">
    <property type="entry name" value="2-comp_sensor_kinase"/>
</dbReference>
<dbReference type="InterPro" id="IPR036890">
    <property type="entry name" value="HATPase_C_sf"/>
</dbReference>
<dbReference type="InterPro" id="IPR005467">
    <property type="entry name" value="His_kinase_dom"/>
</dbReference>
<dbReference type="InterPro" id="IPR036097">
    <property type="entry name" value="HisK_dim/P_sf"/>
</dbReference>
<dbReference type="InterPro" id="IPR004358">
    <property type="entry name" value="Sig_transdc_His_kin-like_C"/>
</dbReference>
<dbReference type="PANTHER" id="PTHR45453:SF2">
    <property type="entry name" value="HISTIDINE KINASE"/>
    <property type="match status" value="1"/>
</dbReference>
<dbReference type="PANTHER" id="PTHR45453">
    <property type="entry name" value="PHOSPHATE REGULON SENSOR PROTEIN PHOR"/>
    <property type="match status" value="1"/>
</dbReference>
<dbReference type="Pfam" id="PF02518">
    <property type="entry name" value="HATPase_c"/>
    <property type="match status" value="1"/>
</dbReference>
<dbReference type="PRINTS" id="PR00344">
    <property type="entry name" value="BCTRLSENSOR"/>
</dbReference>
<dbReference type="SMART" id="SM00387">
    <property type="entry name" value="HATPase_c"/>
    <property type="match status" value="1"/>
</dbReference>
<dbReference type="SUPFAM" id="SSF55874">
    <property type="entry name" value="ATPase domain of HSP90 chaperone/DNA topoisomerase II/histidine kinase"/>
    <property type="match status" value="1"/>
</dbReference>
<dbReference type="SUPFAM" id="SSF47384">
    <property type="entry name" value="Homodimeric domain of signal transducing histidine kinase"/>
    <property type="match status" value="1"/>
</dbReference>
<dbReference type="PROSITE" id="PS50109">
    <property type="entry name" value="HIS_KIN"/>
    <property type="match status" value="1"/>
</dbReference>
<name>GRAS_STAAC</name>
<accession>Q5HI08</accession>